<protein>
    <recommendedName>
        <fullName evidence="1">Transcriptional repressor NrdR</fullName>
    </recommendedName>
</protein>
<keyword id="KW-0067">ATP-binding</keyword>
<keyword id="KW-0238">DNA-binding</keyword>
<keyword id="KW-0479">Metal-binding</keyword>
<keyword id="KW-0547">Nucleotide-binding</keyword>
<keyword id="KW-0678">Repressor</keyword>
<keyword id="KW-0804">Transcription</keyword>
<keyword id="KW-0805">Transcription regulation</keyword>
<keyword id="KW-0862">Zinc</keyword>
<keyword id="KW-0863">Zinc-finger</keyword>
<comment type="function">
    <text evidence="1">Negatively regulates transcription of bacterial ribonucleotide reductase nrd genes and operons by binding to NrdR-boxes.</text>
</comment>
<comment type="cofactor">
    <cofactor evidence="1">
        <name>Zn(2+)</name>
        <dbReference type="ChEBI" id="CHEBI:29105"/>
    </cofactor>
    <text evidence="1">Binds 1 zinc ion.</text>
</comment>
<comment type="similarity">
    <text evidence="1">Belongs to the NrdR family.</text>
</comment>
<sequence>MQCPHCQHTDSRVLESRSSENGQSIRRRRECLQCKYRFTTYERIEFVPITVIKKDGKRESFDRCKLLRGIVRACEKTGIPPSRLEAIVNDIESRLQQDSKREVTSQEIGQLVLEYLRQESEVAYVRFASVYGNFQGIRDFIAALALLQSSEIERAHPSWSQVEEASVITSS</sequence>
<gene>
    <name evidence="1" type="primary">nrdR</name>
    <name type="ordered locus">MAE_43900</name>
</gene>
<proteinExistence type="inferred from homology"/>
<organism>
    <name type="scientific">Microcystis aeruginosa (strain NIES-843 / IAM M-2473)</name>
    <dbReference type="NCBI Taxonomy" id="449447"/>
    <lineage>
        <taxon>Bacteria</taxon>
        <taxon>Bacillati</taxon>
        <taxon>Cyanobacteriota</taxon>
        <taxon>Cyanophyceae</taxon>
        <taxon>Oscillatoriophycideae</taxon>
        <taxon>Chroococcales</taxon>
        <taxon>Microcystaceae</taxon>
        <taxon>Microcystis</taxon>
    </lineage>
</organism>
<accession>B0JTA9</accession>
<feature type="chain" id="PRO_1000080774" description="Transcriptional repressor NrdR">
    <location>
        <begin position="1"/>
        <end position="171"/>
    </location>
</feature>
<feature type="domain" description="ATP-cone" evidence="1">
    <location>
        <begin position="49"/>
        <end position="139"/>
    </location>
</feature>
<feature type="zinc finger region" evidence="1">
    <location>
        <begin position="3"/>
        <end position="34"/>
    </location>
</feature>
<feature type="region of interest" description="Disordered" evidence="2">
    <location>
        <begin position="1"/>
        <end position="21"/>
    </location>
</feature>
<feature type="compositionally biased region" description="Basic and acidic residues" evidence="2">
    <location>
        <begin position="7"/>
        <end position="18"/>
    </location>
</feature>
<name>NRDR_MICAN</name>
<evidence type="ECO:0000255" key="1">
    <source>
        <dbReference type="HAMAP-Rule" id="MF_00440"/>
    </source>
</evidence>
<evidence type="ECO:0000256" key="2">
    <source>
        <dbReference type="SAM" id="MobiDB-lite"/>
    </source>
</evidence>
<reference key="1">
    <citation type="journal article" date="2007" name="DNA Res.">
        <title>Complete genomic structure of the bloom-forming toxic cyanobacterium Microcystis aeruginosa NIES-843.</title>
        <authorList>
            <person name="Kaneko T."/>
            <person name="Nakajima N."/>
            <person name="Okamoto S."/>
            <person name="Suzuki I."/>
            <person name="Tanabe Y."/>
            <person name="Tamaoki M."/>
            <person name="Nakamura Y."/>
            <person name="Kasai F."/>
            <person name="Watanabe A."/>
            <person name="Kawashima K."/>
            <person name="Kishida Y."/>
            <person name="Ono A."/>
            <person name="Shimizu Y."/>
            <person name="Takahashi C."/>
            <person name="Minami C."/>
            <person name="Fujishiro T."/>
            <person name="Kohara M."/>
            <person name="Katoh M."/>
            <person name="Nakazaki N."/>
            <person name="Nakayama S."/>
            <person name="Yamada M."/>
            <person name="Tabata S."/>
            <person name="Watanabe M.M."/>
        </authorList>
    </citation>
    <scope>NUCLEOTIDE SEQUENCE [LARGE SCALE GENOMIC DNA]</scope>
    <source>
        <strain>NIES-843 / IAM M-247</strain>
    </source>
</reference>
<dbReference type="EMBL" id="AP009552">
    <property type="protein sequence ID" value="BAG04212.1"/>
    <property type="molecule type" value="Genomic_DNA"/>
</dbReference>
<dbReference type="RefSeq" id="WP_004162769.1">
    <property type="nucleotide sequence ID" value="NC_010296.1"/>
</dbReference>
<dbReference type="SMR" id="B0JTA9"/>
<dbReference type="STRING" id="449447.MAE_43900"/>
<dbReference type="PaxDb" id="449447-MAE_43900"/>
<dbReference type="EnsemblBacteria" id="BAG04212">
    <property type="protein sequence ID" value="BAG04212"/>
    <property type="gene ID" value="MAE_43900"/>
</dbReference>
<dbReference type="KEGG" id="mar:MAE_43900"/>
<dbReference type="eggNOG" id="COG1327">
    <property type="taxonomic scope" value="Bacteria"/>
</dbReference>
<dbReference type="HOGENOM" id="CLU_108412_0_0_3"/>
<dbReference type="BioCyc" id="MAER449447:MAE_RS19015-MONOMER"/>
<dbReference type="Proteomes" id="UP000001510">
    <property type="component" value="Chromosome"/>
</dbReference>
<dbReference type="GO" id="GO:0005524">
    <property type="term" value="F:ATP binding"/>
    <property type="evidence" value="ECO:0007669"/>
    <property type="project" value="UniProtKB-KW"/>
</dbReference>
<dbReference type="GO" id="GO:0003677">
    <property type="term" value="F:DNA binding"/>
    <property type="evidence" value="ECO:0007669"/>
    <property type="project" value="UniProtKB-KW"/>
</dbReference>
<dbReference type="GO" id="GO:0008270">
    <property type="term" value="F:zinc ion binding"/>
    <property type="evidence" value="ECO:0007669"/>
    <property type="project" value="UniProtKB-UniRule"/>
</dbReference>
<dbReference type="GO" id="GO:0045892">
    <property type="term" value="P:negative regulation of DNA-templated transcription"/>
    <property type="evidence" value="ECO:0007669"/>
    <property type="project" value="UniProtKB-UniRule"/>
</dbReference>
<dbReference type="HAMAP" id="MF_00440">
    <property type="entry name" value="NrdR"/>
    <property type="match status" value="1"/>
</dbReference>
<dbReference type="InterPro" id="IPR005144">
    <property type="entry name" value="ATP-cone_dom"/>
</dbReference>
<dbReference type="InterPro" id="IPR055173">
    <property type="entry name" value="NrdR-like_N"/>
</dbReference>
<dbReference type="InterPro" id="IPR003796">
    <property type="entry name" value="RNR_NrdR-like"/>
</dbReference>
<dbReference type="NCBIfam" id="TIGR00244">
    <property type="entry name" value="transcriptional regulator NrdR"/>
    <property type="match status" value="1"/>
</dbReference>
<dbReference type="PANTHER" id="PTHR30455">
    <property type="entry name" value="TRANSCRIPTIONAL REPRESSOR NRDR"/>
    <property type="match status" value="1"/>
</dbReference>
<dbReference type="PANTHER" id="PTHR30455:SF2">
    <property type="entry name" value="TRANSCRIPTIONAL REPRESSOR NRDR"/>
    <property type="match status" value="1"/>
</dbReference>
<dbReference type="Pfam" id="PF03477">
    <property type="entry name" value="ATP-cone"/>
    <property type="match status" value="1"/>
</dbReference>
<dbReference type="Pfam" id="PF22811">
    <property type="entry name" value="Zn_ribbon_NrdR"/>
    <property type="match status" value="1"/>
</dbReference>
<dbReference type="PROSITE" id="PS51161">
    <property type="entry name" value="ATP_CONE"/>
    <property type="match status" value="1"/>
</dbReference>